<sequence>MNKFYNYNSSSHQVLLNLKVKPNSKQNLISDFVIINNIPYLKLSIKATPEQGKANEEIINYLAKEWKLSRKDIEIIKGHTNSLKTILIKNIDEDYLNLIINSYIK</sequence>
<feature type="chain" id="PRO_0000277941" description="UPF0235 protein RF_1332">
    <location>
        <begin position="1"/>
        <end position="105"/>
    </location>
</feature>
<reference key="1">
    <citation type="journal article" date="2005" name="PLoS Biol.">
        <title>The genome sequence of Rickettsia felis identifies the first putative conjugative plasmid in an obligate intracellular parasite.</title>
        <authorList>
            <person name="Ogata H."/>
            <person name="Renesto P."/>
            <person name="Audic S."/>
            <person name="Robert C."/>
            <person name="Blanc G."/>
            <person name="Fournier P.-E."/>
            <person name="Parinello H."/>
            <person name="Claverie J.-M."/>
            <person name="Raoult D."/>
        </authorList>
    </citation>
    <scope>NUCLEOTIDE SEQUENCE [LARGE SCALE GENOMIC DNA]</scope>
    <source>
        <strain>ATCC VR-1525 / URRWXCal2</strain>
    </source>
</reference>
<organism>
    <name type="scientific">Rickettsia felis (strain ATCC VR-1525 / URRWXCal2)</name>
    <name type="common">Rickettsia azadi</name>
    <dbReference type="NCBI Taxonomy" id="315456"/>
    <lineage>
        <taxon>Bacteria</taxon>
        <taxon>Pseudomonadati</taxon>
        <taxon>Pseudomonadota</taxon>
        <taxon>Alphaproteobacteria</taxon>
        <taxon>Rickettsiales</taxon>
        <taxon>Rickettsiaceae</taxon>
        <taxon>Rickettsieae</taxon>
        <taxon>Rickettsia</taxon>
        <taxon>spotted fever group</taxon>
    </lineage>
</organism>
<evidence type="ECO:0000255" key="1">
    <source>
        <dbReference type="HAMAP-Rule" id="MF_00634"/>
    </source>
</evidence>
<evidence type="ECO:0000305" key="2"/>
<name>Y1332_RICFE</name>
<dbReference type="EMBL" id="CP000053">
    <property type="protein sequence ID" value="AAY62183.1"/>
    <property type="status" value="ALT_INIT"/>
    <property type="molecule type" value="Genomic_DNA"/>
</dbReference>
<dbReference type="SMR" id="Q4UJV6"/>
<dbReference type="STRING" id="315456.RF_1332"/>
<dbReference type="KEGG" id="rfe:RF_1332"/>
<dbReference type="eggNOG" id="COG1872">
    <property type="taxonomic scope" value="Bacteria"/>
</dbReference>
<dbReference type="HOGENOM" id="CLU_130694_6_2_5"/>
<dbReference type="OrthoDB" id="9801972at2"/>
<dbReference type="Proteomes" id="UP000008548">
    <property type="component" value="Chromosome"/>
</dbReference>
<dbReference type="GO" id="GO:0005737">
    <property type="term" value="C:cytoplasm"/>
    <property type="evidence" value="ECO:0007669"/>
    <property type="project" value="TreeGrafter"/>
</dbReference>
<dbReference type="Gene3D" id="3.30.1200.10">
    <property type="entry name" value="YggU-like"/>
    <property type="match status" value="1"/>
</dbReference>
<dbReference type="HAMAP" id="MF_00634">
    <property type="entry name" value="UPF0235"/>
    <property type="match status" value="1"/>
</dbReference>
<dbReference type="InterPro" id="IPR003746">
    <property type="entry name" value="DUF167"/>
</dbReference>
<dbReference type="InterPro" id="IPR036591">
    <property type="entry name" value="YggU-like_sf"/>
</dbReference>
<dbReference type="NCBIfam" id="TIGR00251">
    <property type="entry name" value="DUF167 family protein"/>
    <property type="match status" value="1"/>
</dbReference>
<dbReference type="NCBIfam" id="NF002419">
    <property type="entry name" value="PRK01530.1"/>
    <property type="match status" value="1"/>
</dbReference>
<dbReference type="PANTHER" id="PTHR13420">
    <property type="entry name" value="UPF0235 PROTEIN C15ORF40"/>
    <property type="match status" value="1"/>
</dbReference>
<dbReference type="PANTHER" id="PTHR13420:SF7">
    <property type="entry name" value="UPF0235 PROTEIN C15ORF40"/>
    <property type="match status" value="1"/>
</dbReference>
<dbReference type="Pfam" id="PF02594">
    <property type="entry name" value="DUF167"/>
    <property type="match status" value="1"/>
</dbReference>
<dbReference type="SMART" id="SM01152">
    <property type="entry name" value="DUF167"/>
    <property type="match status" value="1"/>
</dbReference>
<dbReference type="SUPFAM" id="SSF69786">
    <property type="entry name" value="YggU-like"/>
    <property type="match status" value="1"/>
</dbReference>
<comment type="similarity">
    <text evidence="1">Belongs to the UPF0235 family.</text>
</comment>
<comment type="sequence caution" evidence="2">
    <conflict type="erroneous initiation">
        <sequence resource="EMBL-CDS" id="AAY62183"/>
    </conflict>
</comment>
<protein>
    <recommendedName>
        <fullName evidence="1">UPF0235 protein RF_1332</fullName>
    </recommendedName>
</protein>
<gene>
    <name type="ordered locus">RF_1332</name>
</gene>
<accession>Q4UJV6</accession>
<proteinExistence type="inferred from homology"/>